<dbReference type="EC" id="3.4.24.-"/>
<dbReference type="EMBL" id="DS995702">
    <property type="protein sequence ID" value="EEQ29269.1"/>
    <property type="status" value="ALT_SEQ"/>
    <property type="molecule type" value="Genomic_DNA"/>
</dbReference>
<dbReference type="RefSeq" id="XP_002849154.1">
    <property type="nucleotide sequence ID" value="XM_002849108.1"/>
</dbReference>
<dbReference type="SMR" id="C5FIK0"/>
<dbReference type="MEROPS" id="M36.001"/>
<dbReference type="GlyCosmos" id="C5FIK0">
    <property type="glycosylation" value="2 sites, No reported glycans"/>
</dbReference>
<dbReference type="GeneID" id="9229208"/>
<dbReference type="eggNOG" id="ENOG502QTDC">
    <property type="taxonomic scope" value="Eukaryota"/>
</dbReference>
<dbReference type="HOGENOM" id="CLU_012703_3_0_1"/>
<dbReference type="OrthoDB" id="3227768at2759"/>
<dbReference type="Proteomes" id="UP000002035">
    <property type="component" value="Unassembled WGS sequence"/>
</dbReference>
<dbReference type="GO" id="GO:0005576">
    <property type="term" value="C:extracellular region"/>
    <property type="evidence" value="ECO:0007669"/>
    <property type="project" value="UniProtKB-SubCell"/>
</dbReference>
<dbReference type="GO" id="GO:0004222">
    <property type="term" value="F:metalloendopeptidase activity"/>
    <property type="evidence" value="ECO:0007669"/>
    <property type="project" value="InterPro"/>
</dbReference>
<dbReference type="GO" id="GO:0008270">
    <property type="term" value="F:zinc ion binding"/>
    <property type="evidence" value="ECO:0007669"/>
    <property type="project" value="InterPro"/>
</dbReference>
<dbReference type="GO" id="GO:0006508">
    <property type="term" value="P:proteolysis"/>
    <property type="evidence" value="ECO:0007669"/>
    <property type="project" value="UniProtKB-KW"/>
</dbReference>
<dbReference type="CDD" id="cd09596">
    <property type="entry name" value="M36"/>
    <property type="match status" value="1"/>
</dbReference>
<dbReference type="Gene3D" id="3.10.170.10">
    <property type="match status" value="1"/>
</dbReference>
<dbReference type="Gene3D" id="1.10.390.10">
    <property type="entry name" value="Neutral Protease Domain 2"/>
    <property type="match status" value="1"/>
</dbReference>
<dbReference type="InterPro" id="IPR011096">
    <property type="entry name" value="FTP_domain"/>
</dbReference>
<dbReference type="InterPro" id="IPR050371">
    <property type="entry name" value="Fungal_virulence_M36"/>
</dbReference>
<dbReference type="InterPro" id="IPR001842">
    <property type="entry name" value="Peptidase_M36"/>
</dbReference>
<dbReference type="InterPro" id="IPR027268">
    <property type="entry name" value="Peptidase_M4/M1_CTD_sf"/>
</dbReference>
<dbReference type="PANTHER" id="PTHR33478">
    <property type="entry name" value="EXTRACELLULAR METALLOPROTEINASE MEP"/>
    <property type="match status" value="1"/>
</dbReference>
<dbReference type="PANTHER" id="PTHR33478:SF1">
    <property type="entry name" value="EXTRACELLULAR METALLOPROTEINASE MEP"/>
    <property type="match status" value="1"/>
</dbReference>
<dbReference type="Pfam" id="PF07504">
    <property type="entry name" value="FTP"/>
    <property type="match status" value="1"/>
</dbReference>
<dbReference type="Pfam" id="PF02128">
    <property type="entry name" value="Peptidase_M36"/>
    <property type="match status" value="1"/>
</dbReference>
<dbReference type="PRINTS" id="PR00999">
    <property type="entry name" value="FUNGALYSIN"/>
</dbReference>
<dbReference type="SUPFAM" id="SSF55486">
    <property type="entry name" value="Metalloproteases ('zincins'), catalytic domain"/>
    <property type="match status" value="1"/>
</dbReference>
<dbReference type="PROSITE" id="PS00142">
    <property type="entry name" value="ZINC_PROTEASE"/>
    <property type="match status" value="1"/>
</dbReference>
<reference key="1">
    <citation type="journal article" date="2012" name="MBio">
        <title>Comparative genome analysis of Trichophyton rubrum and related dermatophytes reveals candidate genes involved in infection.</title>
        <authorList>
            <person name="Martinez D.A."/>
            <person name="Oliver B.G."/>
            <person name="Graeser Y."/>
            <person name="Goldberg J.M."/>
            <person name="Li W."/>
            <person name="Martinez-Rossi N.M."/>
            <person name="Monod M."/>
            <person name="Shelest E."/>
            <person name="Barton R.C."/>
            <person name="Birch E."/>
            <person name="Brakhage A.A."/>
            <person name="Chen Z."/>
            <person name="Gurr S.J."/>
            <person name="Heiman D."/>
            <person name="Heitman J."/>
            <person name="Kosti I."/>
            <person name="Rossi A."/>
            <person name="Saif S."/>
            <person name="Samalova M."/>
            <person name="Saunders C.W."/>
            <person name="Shea T."/>
            <person name="Summerbell R.C."/>
            <person name="Xu J."/>
            <person name="Young S."/>
            <person name="Zeng Q."/>
            <person name="Birren B.W."/>
            <person name="Cuomo C.A."/>
            <person name="White T.C."/>
        </authorList>
    </citation>
    <scope>NUCLEOTIDE SEQUENCE [LARGE SCALE GENOMIC DNA]</scope>
    <source>
        <strain>ATCC MYA-4605 / CBS 113480</strain>
    </source>
</reference>
<keyword id="KW-0325">Glycoprotein</keyword>
<keyword id="KW-0378">Hydrolase</keyword>
<keyword id="KW-0479">Metal-binding</keyword>
<keyword id="KW-0482">Metalloprotease</keyword>
<keyword id="KW-0645">Protease</keyword>
<keyword id="KW-1185">Reference proteome</keyword>
<keyword id="KW-0964">Secreted</keyword>
<keyword id="KW-0732">Signal</keyword>
<keyword id="KW-0843">Virulence</keyword>
<keyword id="KW-0862">Zinc</keyword>
<keyword id="KW-0865">Zymogen</keyword>
<accession>C5FIK0</accession>
<gene>
    <name type="primary">MEP4</name>
    <name type="ORF">MCYG_02088</name>
</gene>
<evidence type="ECO:0000250" key="1"/>
<evidence type="ECO:0000255" key="2"/>
<evidence type="ECO:0000255" key="3">
    <source>
        <dbReference type="PROSITE-ProRule" id="PRU10095"/>
    </source>
</evidence>
<evidence type="ECO:0000305" key="4"/>
<proteinExistence type="inferred from homology"/>
<feature type="signal peptide" evidence="2">
    <location>
        <begin position="1"/>
        <end position="18"/>
    </location>
</feature>
<feature type="propeptide" id="PRO_0000384083" evidence="1">
    <location>
        <begin position="19"/>
        <end position="260"/>
    </location>
</feature>
<feature type="chain" id="PRO_0000384084" description="Extracellular metalloproteinase 4">
    <location>
        <begin position="261"/>
        <end position="649"/>
    </location>
</feature>
<feature type="active site" evidence="3">
    <location>
        <position position="444"/>
    </location>
</feature>
<feature type="binding site" evidence="3">
    <location>
        <position position="443"/>
    </location>
    <ligand>
        <name>Zn(2+)</name>
        <dbReference type="ChEBI" id="CHEBI:29105"/>
        <note>catalytic</note>
    </ligand>
</feature>
<feature type="binding site" evidence="3">
    <location>
        <position position="447"/>
    </location>
    <ligand>
        <name>Zn(2+)</name>
        <dbReference type="ChEBI" id="CHEBI:29105"/>
        <note>catalytic</note>
    </ligand>
</feature>
<feature type="glycosylation site" description="N-linked (GlcNAc...) asparagine" evidence="2">
    <location>
        <position position="494"/>
    </location>
</feature>
<feature type="glycosylation site" description="N-linked (GlcNAc...) asparagine" evidence="2">
    <location>
        <position position="609"/>
    </location>
</feature>
<comment type="function">
    <text evidence="1">Secreted metalloproteinase probably acting as a virulence factor.</text>
</comment>
<comment type="cofactor">
    <cofactor evidence="1">
        <name>Zn(2+)</name>
        <dbReference type="ChEBI" id="CHEBI:29105"/>
    </cofactor>
    <text evidence="1">Binds 1 zinc ion per subunit.</text>
</comment>
<comment type="subcellular location">
    <subcellularLocation>
        <location>Secreted</location>
    </subcellularLocation>
</comment>
<comment type="similarity">
    <text evidence="4">Belongs to the peptidase M36 family.</text>
</comment>
<comment type="sequence caution" evidence="4">
    <conflict type="erroneous gene model prediction">
        <sequence resource="EMBL-CDS" id="EEQ29269"/>
    </conflict>
</comment>
<sequence>MHGLLLAGLLALPSNVLGHPAEPPNSVNVTHRHIDTSAYFLPQLSLYNKSEDVAEYGGDNITGSSYSGGDHSASNLSSEDYVTVATSLLKATLPYASFRLIDDHYIGDSGIGHVHFRQTVYGIDIDNTDFNVNVGRDGKVFSYGSSFYEGEIPKANPVAKRDFSDPVNALIGAINTLNIPVTAAVGEVKTTPIEGNSTYMFKGTTGALTDPTAQLVYLQKDGGLHLTWRVETDVGDNWLLTYVDAKKNDQVHGVVDYVASAEYQVYPWGVNDPTDGERAHLYFPWFKTGSRNWHIDGRGWHTTTRGNNAIAQDNPSGGWEYEDNHRPTNPLLIFRYPYTQSMTPPASYRDASITQLFYTGNVYHDLLYILGFNEKAGNFQVNNWGKGGKGNDFTILNTQDGSGVNNANFATPPDGQPGRMRMYVWDTSTPYRDGSFEAGIVIHEYTHGVSNRLTGGPANSRCLSSLESGGMGEGWSDFFATVVHLKERDTRNKNYTIGEWASGRQGGIRKYPYSTDLHTNPLMYVDADGLESVHAIGTIWCTILNEVLWNLIERHGMGNVNKIKPTFKDGVPTDGRNLAMKLVLDGMALQPCLPNFVQARDAIIDADMNLTKGANRCELWKAFAKRGLGVGAAYNPEKRVGSSRVPGGC</sequence>
<protein>
    <recommendedName>
        <fullName>Extracellular metalloproteinase 4</fullName>
        <ecNumber>3.4.24.-</ecNumber>
    </recommendedName>
    <alternativeName>
        <fullName>Fungalysin MEP4</fullName>
    </alternativeName>
</protein>
<organism>
    <name type="scientific">Arthroderma otae (strain ATCC MYA-4605 / CBS 113480)</name>
    <name type="common">Microsporum canis</name>
    <dbReference type="NCBI Taxonomy" id="554155"/>
    <lineage>
        <taxon>Eukaryota</taxon>
        <taxon>Fungi</taxon>
        <taxon>Dikarya</taxon>
        <taxon>Ascomycota</taxon>
        <taxon>Pezizomycotina</taxon>
        <taxon>Eurotiomycetes</taxon>
        <taxon>Eurotiomycetidae</taxon>
        <taxon>Onygenales</taxon>
        <taxon>Arthrodermataceae</taxon>
        <taxon>Microsporum</taxon>
    </lineage>
</organism>
<name>MEP4_ARTOC</name>